<sequence length="769" mass="86607">MGKKRAPQKGKTVTKPQEIIVDESKLNWKPVDIPDTLDDFGGFYGLEEIDGVDVKVVDGKVTFVTKKDSKVLKDSNKEKVGDDQESVENESGSDSESELLEFKNLDDIKEGELSAASYSSSDEDEQGNIESSKLTDPSEDVDEDVLKENVFNKDINIDDISPVNLPEWTNLAPLSMTILQSLQNLNFLRPTEIQKKSIPVIMQGVDVMGKASTGSGKTLAYGIPIVEKLISNFSQKNKKPISLIFTPTRELAHQVTDHLKKICEPVLAKSQYSILSLTGGLSIQKQQRLLKYDNSGQIVIATPGRFLELLEKDNTLIKRFSKVDTLILDEADRLLQDGHFDEFEKIIKHLLVERRKNRENSEGSSKIWQTLIFSATFSIDLFDKLSSSRQVKDRRFKNNEDELNAVIQHLMSKIHFNSKPVIIDTNPESKVSSQIKESLIECPPLERDLYCYYFLTMFPGTTLIFCNAIDSVKKLTVYLNNLGIPAFQIHSSMTQKNRLKSLERFKQQSAKQKTINHSNPDSVQLSTVLIASDVAARGLDIPGVQHVIHYHLPRSTDIYIHRSGRTARAGCEGVSAMICSPQESMGPLRKLRKTLATKNSVSTDLNSRSTNRKPIKWQNTVPLLPIETDILSQLRERSRLAGELADHEIASNSLRKDDNWLKKAADELGIDVDSDEDDISKSNSDTFLLKNKNKKMQKTINKDKVKAMRATLNELLSVPIRKDRRQKYLTGGLVNLADNLVKKRGHNSIIGHEKTNALETLKKKKKRNN</sequence>
<accession>A6ZL85</accession>
<comment type="function">
    <text evidence="1">ATP-binding RNA helicase involved in the biogenesis of 60S ribosomal subunits and is required for the normal formation of 25S and 5.8S rRNAs.</text>
</comment>
<comment type="catalytic activity">
    <reaction>
        <text>ATP + H2O = ADP + phosphate + H(+)</text>
        <dbReference type="Rhea" id="RHEA:13065"/>
        <dbReference type="ChEBI" id="CHEBI:15377"/>
        <dbReference type="ChEBI" id="CHEBI:15378"/>
        <dbReference type="ChEBI" id="CHEBI:30616"/>
        <dbReference type="ChEBI" id="CHEBI:43474"/>
        <dbReference type="ChEBI" id="CHEBI:456216"/>
        <dbReference type="EC" id="3.6.4.13"/>
    </reaction>
</comment>
<comment type="subcellular location">
    <subcellularLocation>
        <location evidence="1">Nucleus</location>
        <location evidence="1">Nucleolus</location>
    </subcellularLocation>
</comment>
<comment type="domain">
    <text>The Q motif is unique to and characteristic of the DEAD box family of RNA helicases and controls ATP binding and hydrolysis.</text>
</comment>
<comment type="similarity">
    <text evidence="6">Belongs to the DEAD box helicase family. DDX24/MAK5 subfamily.</text>
</comment>
<keyword id="KW-0067">ATP-binding</keyword>
<keyword id="KW-0347">Helicase</keyword>
<keyword id="KW-0378">Hydrolase</keyword>
<keyword id="KW-0547">Nucleotide-binding</keyword>
<keyword id="KW-0539">Nucleus</keyword>
<keyword id="KW-0597">Phosphoprotein</keyword>
<keyword id="KW-0690">Ribosome biogenesis</keyword>
<keyword id="KW-0694">RNA-binding</keyword>
<keyword id="KW-0698">rRNA processing</keyword>
<protein>
    <recommendedName>
        <fullName>ATP-dependent RNA helicase MAK5</fullName>
        <ecNumber>3.6.4.13</ecNumber>
    </recommendedName>
    <alternativeName>
        <fullName>Maintenance of killer protein 5</fullName>
    </alternativeName>
</protein>
<feature type="chain" id="PRO_0000310212" description="ATP-dependent RNA helicase MAK5">
    <location>
        <begin position="1"/>
        <end position="769"/>
    </location>
</feature>
<feature type="domain" description="Helicase ATP-binding" evidence="3">
    <location>
        <begin position="198"/>
        <end position="395"/>
    </location>
</feature>
<feature type="domain" description="Helicase C-terminal" evidence="4">
    <location>
        <begin position="448"/>
        <end position="611"/>
    </location>
</feature>
<feature type="region of interest" description="Disordered" evidence="5">
    <location>
        <begin position="73"/>
        <end position="99"/>
    </location>
</feature>
<feature type="region of interest" description="Disordered" evidence="5">
    <location>
        <begin position="114"/>
        <end position="140"/>
    </location>
</feature>
<feature type="short sequence motif" description="Q motif">
    <location>
        <begin position="167"/>
        <end position="195"/>
    </location>
</feature>
<feature type="short sequence motif" description="DEAD box">
    <location>
        <begin position="329"/>
        <end position="332"/>
    </location>
</feature>
<feature type="compositionally biased region" description="Basic and acidic residues" evidence="5">
    <location>
        <begin position="73"/>
        <end position="82"/>
    </location>
</feature>
<feature type="compositionally biased region" description="Acidic residues" evidence="5">
    <location>
        <begin position="83"/>
        <end position="99"/>
    </location>
</feature>
<feature type="binding site" evidence="3">
    <location>
        <begin position="211"/>
        <end position="218"/>
    </location>
    <ligand>
        <name>ATP</name>
        <dbReference type="ChEBI" id="CHEBI:30616"/>
    </ligand>
</feature>
<feature type="modified residue" description="Phosphothreonine" evidence="2">
    <location>
        <position position="135"/>
    </location>
</feature>
<feature type="modified residue" description="Phosphoserine" evidence="2">
    <location>
        <position position="138"/>
    </location>
</feature>
<feature type="modified residue" description="Phosphoserine" evidence="2">
    <location>
        <position position="674"/>
    </location>
</feature>
<proteinExistence type="inferred from homology"/>
<reference key="1">
    <citation type="journal article" date="2007" name="Proc. Natl. Acad. Sci. U.S.A.">
        <title>Genome sequencing and comparative analysis of Saccharomyces cerevisiae strain YJM789.</title>
        <authorList>
            <person name="Wei W."/>
            <person name="McCusker J.H."/>
            <person name="Hyman R.W."/>
            <person name="Jones T."/>
            <person name="Ning Y."/>
            <person name="Cao Z."/>
            <person name="Gu Z."/>
            <person name="Bruno D."/>
            <person name="Miranda M."/>
            <person name="Nguyen M."/>
            <person name="Wilhelmy J."/>
            <person name="Komp C."/>
            <person name="Tamse R."/>
            <person name="Wang X."/>
            <person name="Jia P."/>
            <person name="Luedi P."/>
            <person name="Oefner P.J."/>
            <person name="David L."/>
            <person name="Dietrich F.S."/>
            <person name="Li Y."/>
            <person name="Davis R.W."/>
            <person name="Steinmetz L.M."/>
        </authorList>
    </citation>
    <scope>NUCLEOTIDE SEQUENCE [LARGE SCALE GENOMIC DNA]</scope>
    <source>
        <strain>YJM789</strain>
    </source>
</reference>
<name>MAK5_YEAS7</name>
<organism>
    <name type="scientific">Saccharomyces cerevisiae (strain YJM789)</name>
    <name type="common">Baker's yeast</name>
    <dbReference type="NCBI Taxonomy" id="307796"/>
    <lineage>
        <taxon>Eukaryota</taxon>
        <taxon>Fungi</taxon>
        <taxon>Dikarya</taxon>
        <taxon>Ascomycota</taxon>
        <taxon>Saccharomycotina</taxon>
        <taxon>Saccharomycetes</taxon>
        <taxon>Saccharomycetales</taxon>
        <taxon>Saccharomycetaceae</taxon>
        <taxon>Saccharomyces</taxon>
    </lineage>
</organism>
<evidence type="ECO:0000250" key="1"/>
<evidence type="ECO:0000250" key="2">
    <source>
        <dbReference type="UniProtKB" id="P38112"/>
    </source>
</evidence>
<evidence type="ECO:0000255" key="3">
    <source>
        <dbReference type="PROSITE-ProRule" id="PRU00541"/>
    </source>
</evidence>
<evidence type="ECO:0000255" key="4">
    <source>
        <dbReference type="PROSITE-ProRule" id="PRU00542"/>
    </source>
</evidence>
<evidence type="ECO:0000256" key="5">
    <source>
        <dbReference type="SAM" id="MobiDB-lite"/>
    </source>
</evidence>
<evidence type="ECO:0000305" key="6"/>
<gene>
    <name type="primary">MAK5</name>
    <name type="ORF">SCY_0355</name>
</gene>
<dbReference type="EC" id="3.6.4.13"/>
<dbReference type="EMBL" id="AAFW02000011">
    <property type="protein sequence ID" value="EDN64754.1"/>
    <property type="molecule type" value="Genomic_DNA"/>
</dbReference>
<dbReference type="SMR" id="A6ZL85"/>
<dbReference type="HOGENOM" id="CLU_003041_13_0_1"/>
<dbReference type="Proteomes" id="UP000007060">
    <property type="component" value="Unassembled WGS sequence"/>
</dbReference>
<dbReference type="GO" id="GO:0005829">
    <property type="term" value="C:cytosol"/>
    <property type="evidence" value="ECO:0007669"/>
    <property type="project" value="TreeGrafter"/>
</dbReference>
<dbReference type="GO" id="GO:0005730">
    <property type="term" value="C:nucleolus"/>
    <property type="evidence" value="ECO:0007669"/>
    <property type="project" value="UniProtKB-SubCell"/>
</dbReference>
<dbReference type="GO" id="GO:0005524">
    <property type="term" value="F:ATP binding"/>
    <property type="evidence" value="ECO:0007669"/>
    <property type="project" value="UniProtKB-KW"/>
</dbReference>
<dbReference type="GO" id="GO:0016887">
    <property type="term" value="F:ATP hydrolysis activity"/>
    <property type="evidence" value="ECO:0007669"/>
    <property type="project" value="RHEA"/>
</dbReference>
<dbReference type="GO" id="GO:0003723">
    <property type="term" value="F:RNA binding"/>
    <property type="evidence" value="ECO:0007669"/>
    <property type="project" value="UniProtKB-KW"/>
</dbReference>
<dbReference type="GO" id="GO:0003724">
    <property type="term" value="F:RNA helicase activity"/>
    <property type="evidence" value="ECO:0007669"/>
    <property type="project" value="UniProtKB-EC"/>
</dbReference>
<dbReference type="GO" id="GO:0006364">
    <property type="term" value="P:rRNA processing"/>
    <property type="evidence" value="ECO:0007669"/>
    <property type="project" value="UniProtKB-KW"/>
</dbReference>
<dbReference type="CDD" id="cd17946">
    <property type="entry name" value="DEADc_DDX24"/>
    <property type="match status" value="1"/>
</dbReference>
<dbReference type="CDD" id="cd18787">
    <property type="entry name" value="SF2_C_DEAD"/>
    <property type="match status" value="1"/>
</dbReference>
<dbReference type="FunFam" id="3.40.50.300:FF:002641">
    <property type="entry name" value="MAK5p nucleolar protein"/>
    <property type="match status" value="1"/>
</dbReference>
<dbReference type="Gene3D" id="3.40.50.300">
    <property type="entry name" value="P-loop containing nucleotide triphosphate hydrolases"/>
    <property type="match status" value="2"/>
</dbReference>
<dbReference type="InterPro" id="IPR011545">
    <property type="entry name" value="DEAD/DEAH_box_helicase_dom"/>
</dbReference>
<dbReference type="InterPro" id="IPR050079">
    <property type="entry name" value="DEAD_box_RNA_helicase"/>
</dbReference>
<dbReference type="InterPro" id="IPR014001">
    <property type="entry name" value="Helicase_ATP-bd"/>
</dbReference>
<dbReference type="InterPro" id="IPR001650">
    <property type="entry name" value="Helicase_C-like"/>
</dbReference>
<dbReference type="InterPro" id="IPR027417">
    <property type="entry name" value="P-loop_NTPase"/>
</dbReference>
<dbReference type="InterPro" id="IPR000629">
    <property type="entry name" value="RNA-helicase_DEAD-box_CS"/>
</dbReference>
<dbReference type="InterPro" id="IPR014014">
    <property type="entry name" value="RNA_helicase_DEAD_Q_motif"/>
</dbReference>
<dbReference type="PANTHER" id="PTHR47959:SF1">
    <property type="entry name" value="ATP-DEPENDENT RNA HELICASE DBPA"/>
    <property type="match status" value="1"/>
</dbReference>
<dbReference type="PANTHER" id="PTHR47959">
    <property type="entry name" value="ATP-DEPENDENT RNA HELICASE RHLE-RELATED"/>
    <property type="match status" value="1"/>
</dbReference>
<dbReference type="Pfam" id="PF00270">
    <property type="entry name" value="DEAD"/>
    <property type="match status" value="1"/>
</dbReference>
<dbReference type="Pfam" id="PF00271">
    <property type="entry name" value="Helicase_C"/>
    <property type="match status" value="1"/>
</dbReference>
<dbReference type="SMART" id="SM00487">
    <property type="entry name" value="DEXDc"/>
    <property type="match status" value="1"/>
</dbReference>
<dbReference type="SMART" id="SM00490">
    <property type="entry name" value="HELICc"/>
    <property type="match status" value="1"/>
</dbReference>
<dbReference type="SUPFAM" id="SSF52540">
    <property type="entry name" value="P-loop containing nucleoside triphosphate hydrolases"/>
    <property type="match status" value="1"/>
</dbReference>
<dbReference type="PROSITE" id="PS00039">
    <property type="entry name" value="DEAD_ATP_HELICASE"/>
    <property type="match status" value="1"/>
</dbReference>
<dbReference type="PROSITE" id="PS51192">
    <property type="entry name" value="HELICASE_ATP_BIND_1"/>
    <property type="match status" value="1"/>
</dbReference>
<dbReference type="PROSITE" id="PS51194">
    <property type="entry name" value="HELICASE_CTER"/>
    <property type="match status" value="1"/>
</dbReference>
<dbReference type="PROSITE" id="PS51195">
    <property type="entry name" value="Q_MOTIF"/>
    <property type="match status" value="1"/>
</dbReference>